<organism>
    <name type="scientific">Brachyspira hyodysenteriae (strain ATCC 49526 / WA1)</name>
    <dbReference type="NCBI Taxonomy" id="565034"/>
    <lineage>
        <taxon>Bacteria</taxon>
        <taxon>Pseudomonadati</taxon>
        <taxon>Spirochaetota</taxon>
        <taxon>Spirochaetia</taxon>
        <taxon>Brachyspirales</taxon>
        <taxon>Brachyspiraceae</taxon>
        <taxon>Brachyspira</taxon>
    </lineage>
</organism>
<name>RS19_BRAHW</name>
<feature type="chain" id="PRO_1000146371" description="Small ribosomal subunit protein uS19">
    <location>
        <begin position="1"/>
        <end position="89"/>
    </location>
</feature>
<keyword id="KW-0687">Ribonucleoprotein</keyword>
<keyword id="KW-0689">Ribosomal protein</keyword>
<keyword id="KW-0694">RNA-binding</keyword>
<keyword id="KW-0699">rRNA-binding</keyword>
<comment type="function">
    <text evidence="1">Protein S19 forms a complex with S13 that binds strongly to the 16S ribosomal RNA.</text>
</comment>
<comment type="similarity">
    <text evidence="1">Belongs to the universal ribosomal protein uS19 family.</text>
</comment>
<reference key="1">
    <citation type="journal article" date="2009" name="PLoS ONE">
        <title>Genome sequence of the pathogenic intestinal spirochete Brachyspira hyodysenteriae reveals adaptations to its lifestyle in the porcine large intestine.</title>
        <authorList>
            <person name="Bellgard M.I."/>
            <person name="Wanchanthuek P."/>
            <person name="La T."/>
            <person name="Ryan K."/>
            <person name="Moolhuijzen P."/>
            <person name="Albertyn Z."/>
            <person name="Shaban B."/>
            <person name="Motro Y."/>
            <person name="Dunn D.S."/>
            <person name="Schibeci D."/>
            <person name="Hunter A."/>
            <person name="Barrero R."/>
            <person name="Phillips N.D."/>
            <person name="Hampson D.J."/>
        </authorList>
    </citation>
    <scope>NUCLEOTIDE SEQUENCE [LARGE SCALE GENOMIC DNA]</scope>
    <source>
        <strain>ATCC 49526 / WA1</strain>
    </source>
</reference>
<sequence length="89" mass="9917">MSRSIKKGPFVDKNLFKKIQAGDNKHQIKTYSRASTIIPEMIGFTINVHNGKTFVAVYIQENMIGHKLGEFAPTRKFISHAGAAKVGKK</sequence>
<protein>
    <recommendedName>
        <fullName evidence="1">Small ribosomal subunit protein uS19</fullName>
    </recommendedName>
    <alternativeName>
        <fullName evidence="2">30S ribosomal protein S19</fullName>
    </alternativeName>
</protein>
<dbReference type="EMBL" id="CP001357">
    <property type="protein sequence ID" value="ACN84586.1"/>
    <property type="molecule type" value="Genomic_DNA"/>
</dbReference>
<dbReference type="RefSeq" id="WP_008723378.1">
    <property type="nucleotide sequence ID" value="NC_012225.1"/>
</dbReference>
<dbReference type="SMR" id="C0QW00"/>
<dbReference type="STRING" id="565034.BHWA1_02128"/>
<dbReference type="GeneID" id="66487635"/>
<dbReference type="KEGG" id="bhy:BHWA1_02128"/>
<dbReference type="eggNOG" id="COG0185">
    <property type="taxonomic scope" value="Bacteria"/>
</dbReference>
<dbReference type="HOGENOM" id="CLU_144911_0_1_12"/>
<dbReference type="Proteomes" id="UP000001803">
    <property type="component" value="Chromosome"/>
</dbReference>
<dbReference type="GO" id="GO:0005737">
    <property type="term" value="C:cytoplasm"/>
    <property type="evidence" value="ECO:0007669"/>
    <property type="project" value="UniProtKB-ARBA"/>
</dbReference>
<dbReference type="GO" id="GO:0015935">
    <property type="term" value="C:small ribosomal subunit"/>
    <property type="evidence" value="ECO:0007669"/>
    <property type="project" value="InterPro"/>
</dbReference>
<dbReference type="GO" id="GO:0019843">
    <property type="term" value="F:rRNA binding"/>
    <property type="evidence" value="ECO:0007669"/>
    <property type="project" value="UniProtKB-UniRule"/>
</dbReference>
<dbReference type="GO" id="GO:0003735">
    <property type="term" value="F:structural constituent of ribosome"/>
    <property type="evidence" value="ECO:0007669"/>
    <property type="project" value="InterPro"/>
</dbReference>
<dbReference type="GO" id="GO:0000028">
    <property type="term" value="P:ribosomal small subunit assembly"/>
    <property type="evidence" value="ECO:0007669"/>
    <property type="project" value="TreeGrafter"/>
</dbReference>
<dbReference type="GO" id="GO:0006412">
    <property type="term" value="P:translation"/>
    <property type="evidence" value="ECO:0007669"/>
    <property type="project" value="UniProtKB-UniRule"/>
</dbReference>
<dbReference type="FunFam" id="3.30.860.10:FF:000001">
    <property type="entry name" value="30S ribosomal protein S19"/>
    <property type="match status" value="1"/>
</dbReference>
<dbReference type="Gene3D" id="3.30.860.10">
    <property type="entry name" value="30s Ribosomal Protein S19, Chain A"/>
    <property type="match status" value="1"/>
</dbReference>
<dbReference type="HAMAP" id="MF_00531">
    <property type="entry name" value="Ribosomal_uS19"/>
    <property type="match status" value="1"/>
</dbReference>
<dbReference type="InterPro" id="IPR002222">
    <property type="entry name" value="Ribosomal_uS19"/>
</dbReference>
<dbReference type="InterPro" id="IPR005732">
    <property type="entry name" value="Ribosomal_uS19_bac-type"/>
</dbReference>
<dbReference type="InterPro" id="IPR020934">
    <property type="entry name" value="Ribosomal_uS19_CS"/>
</dbReference>
<dbReference type="InterPro" id="IPR023575">
    <property type="entry name" value="Ribosomal_uS19_SF"/>
</dbReference>
<dbReference type="NCBIfam" id="TIGR01050">
    <property type="entry name" value="rpsS_bact"/>
    <property type="match status" value="1"/>
</dbReference>
<dbReference type="PANTHER" id="PTHR11880">
    <property type="entry name" value="RIBOSOMAL PROTEIN S19P FAMILY MEMBER"/>
    <property type="match status" value="1"/>
</dbReference>
<dbReference type="PANTHER" id="PTHR11880:SF8">
    <property type="entry name" value="SMALL RIBOSOMAL SUBUNIT PROTEIN US19M"/>
    <property type="match status" value="1"/>
</dbReference>
<dbReference type="Pfam" id="PF00203">
    <property type="entry name" value="Ribosomal_S19"/>
    <property type="match status" value="1"/>
</dbReference>
<dbReference type="PIRSF" id="PIRSF002144">
    <property type="entry name" value="Ribosomal_S19"/>
    <property type="match status" value="1"/>
</dbReference>
<dbReference type="PRINTS" id="PR00975">
    <property type="entry name" value="RIBOSOMALS19"/>
</dbReference>
<dbReference type="SUPFAM" id="SSF54570">
    <property type="entry name" value="Ribosomal protein S19"/>
    <property type="match status" value="1"/>
</dbReference>
<dbReference type="PROSITE" id="PS00323">
    <property type="entry name" value="RIBOSOMAL_S19"/>
    <property type="match status" value="1"/>
</dbReference>
<gene>
    <name evidence="1" type="primary">rpsS</name>
    <name type="ordered locus">BHWA1_02128</name>
</gene>
<accession>C0QW00</accession>
<evidence type="ECO:0000255" key="1">
    <source>
        <dbReference type="HAMAP-Rule" id="MF_00531"/>
    </source>
</evidence>
<evidence type="ECO:0000305" key="2"/>
<proteinExistence type="inferred from homology"/>